<accession>P15088</accession>
<accession>Q96E94</accession>
<feature type="signal peptide">
    <location>
        <begin position="1"/>
        <end position="15"/>
    </location>
</feature>
<feature type="propeptide" id="PRO_0000004395" description="Activation peptide" evidence="8">
    <location>
        <begin position="16"/>
        <end position="109"/>
    </location>
</feature>
<feature type="chain" id="PRO_0000004396" description="Mast cell carboxypeptidase A">
    <location>
        <begin position="110"/>
        <end position="417"/>
    </location>
</feature>
<feature type="domain" description="Peptidase M14" evidence="3">
    <location>
        <begin position="118"/>
        <end position="412"/>
    </location>
</feature>
<feature type="active site" description="Proton donor/acceptor" evidence="3">
    <location>
        <position position="378"/>
    </location>
</feature>
<feature type="binding site" evidence="3">
    <location>
        <position position="176"/>
    </location>
    <ligand>
        <name>Zn(2+)</name>
        <dbReference type="ChEBI" id="CHEBI:29105"/>
        <note>catalytic</note>
    </ligand>
</feature>
<feature type="binding site" evidence="3">
    <location>
        <position position="179"/>
    </location>
    <ligand>
        <name>Zn(2+)</name>
        <dbReference type="ChEBI" id="CHEBI:29105"/>
        <note>catalytic</note>
    </ligand>
</feature>
<feature type="binding site" evidence="3">
    <location>
        <position position="304"/>
    </location>
    <ligand>
        <name>Zn(2+)</name>
        <dbReference type="ChEBI" id="CHEBI:29105"/>
        <note>catalytic</note>
    </ligand>
</feature>
<feature type="disulfide bond" evidence="1">
    <location>
        <begin position="173"/>
        <end position="186"/>
    </location>
</feature>
<feature type="disulfide bond" evidence="1">
    <location>
        <begin position="245"/>
        <end position="268"/>
    </location>
</feature>
<feature type="sequence variant" id="VAR_048602" description="In dbSNP:rs2270523.">
    <original>A</original>
    <variation>S</variation>
    <location>
        <position position="81"/>
    </location>
</feature>
<feature type="sequence variant" id="VAR_033725" description="In dbSNP:rs12489516." evidence="4 5 6 7">
    <original>T</original>
    <variation>M</variation>
    <location>
        <position position="171"/>
    </location>
</feature>
<feature type="sequence conflict" description="In Ref. 4; AAH12613." evidence="9" ref="4">
    <original>N</original>
    <variation>K</variation>
    <location>
        <position position="63"/>
    </location>
</feature>
<feature type="sequence conflict" description="In Ref. 5; AAB22578." evidence="9" ref="5">
    <original>G</original>
    <variation>R</variation>
    <location>
        <position position="146"/>
    </location>
</feature>
<feature type="sequence conflict" description="In Ref. 5; AAB22578." evidence="9" ref="5">
    <original>I</original>
    <variation>T</variation>
    <location>
        <position position="301"/>
    </location>
</feature>
<feature type="sequence conflict" description="In Ref. 5; AAB22578." evidence="9" ref="5">
    <original>I</original>
    <variation>N</variation>
    <location>
        <position position="355"/>
    </location>
</feature>
<dbReference type="EC" id="3.4.17.1"/>
<dbReference type="EMBL" id="M27717">
    <property type="protein sequence ID" value="AAA35652.1"/>
    <property type="molecule type" value="mRNA"/>
</dbReference>
<dbReference type="EMBL" id="M73720">
    <property type="protein sequence ID" value="AAA59568.1"/>
    <property type="molecule type" value="Genomic_DNA"/>
</dbReference>
<dbReference type="EMBL" id="M73716">
    <property type="protein sequence ID" value="AAA59568.1"/>
    <property type="status" value="JOINED"/>
    <property type="molecule type" value="Genomic_DNA"/>
</dbReference>
<dbReference type="EMBL" id="M73717">
    <property type="protein sequence ID" value="AAA59568.1"/>
    <property type="status" value="JOINED"/>
    <property type="molecule type" value="Genomic_DNA"/>
</dbReference>
<dbReference type="EMBL" id="M73718">
    <property type="protein sequence ID" value="AAA59568.1"/>
    <property type="status" value="JOINED"/>
    <property type="molecule type" value="Genomic_DNA"/>
</dbReference>
<dbReference type="EMBL" id="M73719">
    <property type="protein sequence ID" value="AAA59568.1"/>
    <property type="status" value="JOINED"/>
    <property type="molecule type" value="Genomic_DNA"/>
</dbReference>
<dbReference type="EMBL" id="AC092979">
    <property type="status" value="NOT_ANNOTATED_CDS"/>
    <property type="molecule type" value="Genomic_DNA"/>
</dbReference>
<dbReference type="EMBL" id="BC012613">
    <property type="protein sequence ID" value="AAH12613.1"/>
    <property type="molecule type" value="mRNA"/>
</dbReference>
<dbReference type="EMBL" id="S40234">
    <property type="protein sequence ID" value="AAB22578.2"/>
    <property type="molecule type" value="mRNA"/>
</dbReference>
<dbReference type="CCDS" id="CCDS3138.1"/>
<dbReference type="PIR" id="A43929">
    <property type="entry name" value="A43929"/>
</dbReference>
<dbReference type="RefSeq" id="NP_001861.2">
    <property type="nucleotide sequence ID" value="NM_001870.4"/>
</dbReference>
<dbReference type="SMR" id="P15088"/>
<dbReference type="BioGRID" id="107751">
    <property type="interactions" value="4"/>
</dbReference>
<dbReference type="FunCoup" id="P15088">
    <property type="interactions" value="131"/>
</dbReference>
<dbReference type="IntAct" id="P15088">
    <property type="interactions" value="2"/>
</dbReference>
<dbReference type="STRING" id="9606.ENSP00000296046"/>
<dbReference type="BindingDB" id="P15088"/>
<dbReference type="ChEMBL" id="CHEMBL2645"/>
<dbReference type="MEROPS" id="M14.010"/>
<dbReference type="GlyConnect" id="1491">
    <property type="glycosylation" value="1 N-Linked glycan (1 site)"/>
</dbReference>
<dbReference type="GlyCosmos" id="P15088">
    <property type="glycosylation" value="1 site, 1 glycan"/>
</dbReference>
<dbReference type="GlyGen" id="P15088">
    <property type="glycosylation" value="1 site, 7 N-linked glycans (1 site)"/>
</dbReference>
<dbReference type="iPTMnet" id="P15088"/>
<dbReference type="PhosphoSitePlus" id="P15088"/>
<dbReference type="BioMuta" id="CPA3"/>
<dbReference type="DMDM" id="317373331"/>
<dbReference type="OGP" id="P15088"/>
<dbReference type="jPOST" id="P15088"/>
<dbReference type="MassIVE" id="P15088"/>
<dbReference type="PaxDb" id="9606-ENSP00000296046"/>
<dbReference type="PeptideAtlas" id="P15088"/>
<dbReference type="ProteomicsDB" id="53105"/>
<dbReference type="Antibodypedia" id="1510">
    <property type="antibodies" value="196 antibodies from 26 providers"/>
</dbReference>
<dbReference type="DNASU" id="1359"/>
<dbReference type="Ensembl" id="ENST00000296046.4">
    <property type="protein sequence ID" value="ENSP00000296046.3"/>
    <property type="gene ID" value="ENSG00000163751.4"/>
</dbReference>
<dbReference type="GeneID" id="1359"/>
<dbReference type="KEGG" id="hsa:1359"/>
<dbReference type="MANE-Select" id="ENST00000296046.4">
    <property type="protein sequence ID" value="ENSP00000296046.3"/>
    <property type="RefSeq nucleotide sequence ID" value="NM_001870.4"/>
    <property type="RefSeq protein sequence ID" value="NP_001861.2"/>
</dbReference>
<dbReference type="UCSC" id="uc003ewm.4">
    <property type="organism name" value="human"/>
</dbReference>
<dbReference type="AGR" id="HGNC:2298"/>
<dbReference type="CTD" id="1359"/>
<dbReference type="DisGeNET" id="1359"/>
<dbReference type="GeneCards" id="CPA3"/>
<dbReference type="HGNC" id="HGNC:2298">
    <property type="gene designation" value="CPA3"/>
</dbReference>
<dbReference type="HPA" id="ENSG00000163751">
    <property type="expression patterns" value="Tissue enhanced (gallbladder, lung)"/>
</dbReference>
<dbReference type="MIM" id="114851">
    <property type="type" value="gene"/>
</dbReference>
<dbReference type="neXtProt" id="NX_P15088"/>
<dbReference type="OpenTargets" id="ENSG00000163751"/>
<dbReference type="PharmGKB" id="PA26818"/>
<dbReference type="VEuPathDB" id="HostDB:ENSG00000163751"/>
<dbReference type="eggNOG" id="KOG2650">
    <property type="taxonomic scope" value="Eukaryota"/>
</dbReference>
<dbReference type="GeneTree" id="ENSGT00940000161551"/>
<dbReference type="HOGENOM" id="CLU_019326_0_0_1"/>
<dbReference type="InParanoid" id="P15088"/>
<dbReference type="OMA" id="PPNHKDL"/>
<dbReference type="OrthoDB" id="3626597at2759"/>
<dbReference type="PAN-GO" id="P15088">
    <property type="GO annotations" value="3 GO annotations based on evolutionary models"/>
</dbReference>
<dbReference type="PhylomeDB" id="P15088"/>
<dbReference type="TreeFam" id="TF317197"/>
<dbReference type="BRENDA" id="3.4.17.1">
    <property type="organism ID" value="2681"/>
</dbReference>
<dbReference type="PathwayCommons" id="P15088"/>
<dbReference type="Reactome" id="R-HSA-2022377">
    <property type="pathway name" value="Metabolism of Angiotensinogen to Angiotensins"/>
</dbReference>
<dbReference type="SignaLink" id="P15088"/>
<dbReference type="BioGRID-ORCS" id="1359">
    <property type="hits" value="12 hits in 1150 CRISPR screens"/>
</dbReference>
<dbReference type="ChiTaRS" id="CPA3">
    <property type="organism name" value="human"/>
</dbReference>
<dbReference type="GeneWiki" id="CPA3"/>
<dbReference type="GenomeRNAi" id="1359"/>
<dbReference type="Pharos" id="P15088">
    <property type="development level" value="Tchem"/>
</dbReference>
<dbReference type="PRO" id="PR:P15088"/>
<dbReference type="Proteomes" id="UP000005640">
    <property type="component" value="Chromosome 3"/>
</dbReference>
<dbReference type="RNAct" id="P15088">
    <property type="molecule type" value="protein"/>
</dbReference>
<dbReference type="Bgee" id="ENSG00000163751">
    <property type="expression patterns" value="Expressed in gall bladder and 141 other cell types or tissues"/>
</dbReference>
<dbReference type="GO" id="GO:0062023">
    <property type="term" value="C:collagen-containing extracellular matrix"/>
    <property type="evidence" value="ECO:0007005"/>
    <property type="project" value="BHF-UCL"/>
</dbReference>
<dbReference type="GO" id="GO:0005576">
    <property type="term" value="C:extracellular region"/>
    <property type="evidence" value="ECO:0007005"/>
    <property type="project" value="BHF-UCL"/>
</dbReference>
<dbReference type="GO" id="GO:0005615">
    <property type="term" value="C:extracellular space"/>
    <property type="evidence" value="ECO:0000318"/>
    <property type="project" value="GO_Central"/>
</dbReference>
<dbReference type="GO" id="GO:0030141">
    <property type="term" value="C:secretory granule"/>
    <property type="evidence" value="ECO:0000303"/>
    <property type="project" value="UniProtKB"/>
</dbReference>
<dbReference type="GO" id="GO:0030133">
    <property type="term" value="C:transport vesicle"/>
    <property type="evidence" value="ECO:0007669"/>
    <property type="project" value="UniProtKB-SubCell"/>
</dbReference>
<dbReference type="GO" id="GO:0004181">
    <property type="term" value="F:metallocarboxypeptidase activity"/>
    <property type="evidence" value="ECO:0000318"/>
    <property type="project" value="GO_Central"/>
</dbReference>
<dbReference type="GO" id="GO:0008270">
    <property type="term" value="F:zinc ion binding"/>
    <property type="evidence" value="ECO:0007669"/>
    <property type="project" value="InterPro"/>
</dbReference>
<dbReference type="GO" id="GO:0002003">
    <property type="term" value="P:angiotensin maturation"/>
    <property type="evidence" value="ECO:0007669"/>
    <property type="project" value="Ensembl"/>
</dbReference>
<dbReference type="GO" id="GO:0006508">
    <property type="term" value="P:proteolysis"/>
    <property type="evidence" value="ECO:0000318"/>
    <property type="project" value="GO_Central"/>
</dbReference>
<dbReference type="CDD" id="cd03871">
    <property type="entry name" value="M14_CPB"/>
    <property type="match status" value="1"/>
</dbReference>
<dbReference type="FunFam" id="3.30.70.340:FF:000002">
    <property type="entry name" value="Carboxypeptidase A"/>
    <property type="match status" value="1"/>
</dbReference>
<dbReference type="FunFam" id="3.40.630.10:FF:000001">
    <property type="entry name" value="Carboxypeptidase B"/>
    <property type="match status" value="1"/>
</dbReference>
<dbReference type="Gene3D" id="3.30.70.340">
    <property type="entry name" value="Metallocarboxypeptidase-like"/>
    <property type="match status" value="1"/>
</dbReference>
<dbReference type="Gene3D" id="3.40.630.10">
    <property type="entry name" value="Zn peptidases"/>
    <property type="match status" value="1"/>
</dbReference>
<dbReference type="InterPro" id="IPR034253">
    <property type="entry name" value="CPB_M14_CPD"/>
</dbReference>
<dbReference type="InterPro" id="IPR036990">
    <property type="entry name" value="M14A-like_propep"/>
</dbReference>
<dbReference type="InterPro" id="IPR003146">
    <property type="entry name" value="M14A_act_pep"/>
</dbReference>
<dbReference type="InterPro" id="IPR000834">
    <property type="entry name" value="Peptidase_M14"/>
</dbReference>
<dbReference type="PANTHER" id="PTHR11705:SF65">
    <property type="entry name" value="MAST CELL CARBOXYPEPTIDASE A"/>
    <property type="match status" value="1"/>
</dbReference>
<dbReference type="PANTHER" id="PTHR11705">
    <property type="entry name" value="PROTEASE FAMILY M14 CARBOXYPEPTIDASE A,B"/>
    <property type="match status" value="1"/>
</dbReference>
<dbReference type="Pfam" id="PF00246">
    <property type="entry name" value="Peptidase_M14"/>
    <property type="match status" value="1"/>
</dbReference>
<dbReference type="Pfam" id="PF02244">
    <property type="entry name" value="Propep_M14"/>
    <property type="match status" value="1"/>
</dbReference>
<dbReference type="PRINTS" id="PR00765">
    <property type="entry name" value="CRBOXYPTASEA"/>
</dbReference>
<dbReference type="SMART" id="SM00631">
    <property type="entry name" value="Zn_pept"/>
    <property type="match status" value="1"/>
</dbReference>
<dbReference type="SUPFAM" id="SSF54897">
    <property type="entry name" value="Protease propeptides/inhibitors"/>
    <property type="match status" value="1"/>
</dbReference>
<dbReference type="SUPFAM" id="SSF53187">
    <property type="entry name" value="Zn-dependent exopeptidases"/>
    <property type="match status" value="1"/>
</dbReference>
<dbReference type="PROSITE" id="PS00133">
    <property type="entry name" value="CARBOXYPEPT_ZN_2"/>
    <property type="match status" value="1"/>
</dbReference>
<dbReference type="PROSITE" id="PS52035">
    <property type="entry name" value="PEPTIDASE_M14"/>
    <property type="match status" value="1"/>
</dbReference>
<reference key="1">
    <citation type="journal article" date="1989" name="Proc. Natl. Acad. Sci. U.S.A.">
        <title>Cloning of cDNAs that encode human mast cell carboxypeptidase A, and comparison of the protein with mouse mast cell carboxypeptidase A and rat pancreatic carboxypeptidases.</title>
        <authorList>
            <person name="Reynolds D.S."/>
            <person name="Gurley D.S."/>
            <person name="Stevens R.L."/>
            <person name="Sugarbaker D.J."/>
            <person name="Austen K.F."/>
            <person name="Serafin W.E."/>
        </authorList>
    </citation>
    <scope>NUCLEOTIDE SEQUENCE [MRNA]</scope>
    <scope>VARIANT MET-171</scope>
    <source>
        <tissue>Lung</tissue>
    </source>
</reference>
<reference key="2">
    <citation type="journal article" date="1992" name="J. Clin. Invest.">
        <title>Cloning and characterization of the novel gene for mast cell carboxypeptidase A.</title>
        <authorList>
            <person name="Reynolds D.S."/>
            <person name="Gurley D.S."/>
            <person name="Austen K.F."/>
        </authorList>
    </citation>
    <scope>NUCLEOTIDE SEQUENCE [GENOMIC DNA]</scope>
    <scope>VARIANT MET-171</scope>
    <source>
        <tissue>Mast cell</tissue>
    </source>
</reference>
<reference key="3">
    <citation type="journal article" date="2006" name="Nature">
        <title>The DNA sequence, annotation and analysis of human chromosome 3.</title>
        <authorList>
            <person name="Muzny D.M."/>
            <person name="Scherer S.E."/>
            <person name="Kaul R."/>
            <person name="Wang J."/>
            <person name="Yu J."/>
            <person name="Sudbrak R."/>
            <person name="Buhay C.J."/>
            <person name="Chen R."/>
            <person name="Cree A."/>
            <person name="Ding Y."/>
            <person name="Dugan-Rocha S."/>
            <person name="Gill R."/>
            <person name="Gunaratne P."/>
            <person name="Harris R.A."/>
            <person name="Hawes A.C."/>
            <person name="Hernandez J."/>
            <person name="Hodgson A.V."/>
            <person name="Hume J."/>
            <person name="Jackson A."/>
            <person name="Khan Z.M."/>
            <person name="Kovar-Smith C."/>
            <person name="Lewis L.R."/>
            <person name="Lozado R.J."/>
            <person name="Metzker M.L."/>
            <person name="Milosavljevic A."/>
            <person name="Miner G.R."/>
            <person name="Morgan M.B."/>
            <person name="Nazareth L.V."/>
            <person name="Scott G."/>
            <person name="Sodergren E."/>
            <person name="Song X.-Z."/>
            <person name="Steffen D."/>
            <person name="Wei S."/>
            <person name="Wheeler D.A."/>
            <person name="Wright M.W."/>
            <person name="Worley K.C."/>
            <person name="Yuan Y."/>
            <person name="Zhang Z."/>
            <person name="Adams C.Q."/>
            <person name="Ansari-Lari M.A."/>
            <person name="Ayele M."/>
            <person name="Brown M.J."/>
            <person name="Chen G."/>
            <person name="Chen Z."/>
            <person name="Clendenning J."/>
            <person name="Clerc-Blankenburg K.P."/>
            <person name="Chen R."/>
            <person name="Chen Z."/>
            <person name="Davis C."/>
            <person name="Delgado O."/>
            <person name="Dinh H.H."/>
            <person name="Dong W."/>
            <person name="Draper H."/>
            <person name="Ernst S."/>
            <person name="Fu G."/>
            <person name="Gonzalez-Garay M.L."/>
            <person name="Garcia D.K."/>
            <person name="Gillett W."/>
            <person name="Gu J."/>
            <person name="Hao B."/>
            <person name="Haugen E."/>
            <person name="Havlak P."/>
            <person name="He X."/>
            <person name="Hennig S."/>
            <person name="Hu S."/>
            <person name="Huang W."/>
            <person name="Jackson L.R."/>
            <person name="Jacob L.S."/>
            <person name="Kelly S.H."/>
            <person name="Kube M."/>
            <person name="Levy R."/>
            <person name="Li Z."/>
            <person name="Liu B."/>
            <person name="Liu J."/>
            <person name="Liu W."/>
            <person name="Lu J."/>
            <person name="Maheshwari M."/>
            <person name="Nguyen B.-V."/>
            <person name="Okwuonu G.O."/>
            <person name="Palmeiri A."/>
            <person name="Pasternak S."/>
            <person name="Perez L.M."/>
            <person name="Phelps K.A."/>
            <person name="Plopper F.J."/>
            <person name="Qiang B."/>
            <person name="Raymond C."/>
            <person name="Rodriguez R."/>
            <person name="Saenphimmachak C."/>
            <person name="Santibanez J."/>
            <person name="Shen H."/>
            <person name="Shen Y."/>
            <person name="Subramanian S."/>
            <person name="Tabor P.E."/>
            <person name="Verduzco D."/>
            <person name="Waldron L."/>
            <person name="Wang J."/>
            <person name="Wang J."/>
            <person name="Wang Q."/>
            <person name="Williams G.A."/>
            <person name="Wong G.K.-S."/>
            <person name="Yao Z."/>
            <person name="Zhang J."/>
            <person name="Zhang X."/>
            <person name="Zhao G."/>
            <person name="Zhou J."/>
            <person name="Zhou Y."/>
            <person name="Nelson D."/>
            <person name="Lehrach H."/>
            <person name="Reinhardt R."/>
            <person name="Naylor S.L."/>
            <person name="Yang H."/>
            <person name="Olson M."/>
            <person name="Weinstock G."/>
            <person name="Gibbs R.A."/>
        </authorList>
    </citation>
    <scope>NUCLEOTIDE SEQUENCE [LARGE SCALE GENOMIC DNA]</scope>
</reference>
<reference key="4">
    <citation type="journal article" date="2004" name="Genome Res.">
        <title>The status, quality, and expansion of the NIH full-length cDNA project: the Mammalian Gene Collection (MGC).</title>
        <authorList>
            <consortium name="The MGC Project Team"/>
        </authorList>
    </citation>
    <scope>NUCLEOTIDE SEQUENCE [LARGE SCALE MRNA]</scope>
    <scope>VARIANT MET-171</scope>
    <source>
        <tissue>Bone marrow</tissue>
    </source>
</reference>
<reference key="5">
    <citation type="journal article" date="1992" name="J. Invest. Dermatol.">
        <title>Human skin mast cell carboxypeptidase: functional characterization, cDNA cloning, and genealogy.</title>
        <authorList>
            <person name="Natsuaki M."/>
            <person name="Stewart C.B."/>
            <person name="Vanderslice P."/>
            <person name="Schwartz L.B."/>
            <person name="Natsuaki M."/>
            <person name="Wintroub B.U."/>
            <person name="Rutter W.J."/>
            <person name="Goldstein S.M."/>
        </authorList>
    </citation>
    <scope>NUCLEOTIDE SEQUENCE [MRNA] OF 110-417</scope>
    <scope>VARIANT MET-171</scope>
</reference>
<reference key="6">
    <citation type="journal article" date="1989" name="J. Clin. Invest.">
        <title>Human mast cell carboxypeptidase. Purification and characterization.</title>
        <authorList>
            <person name="Goldstein S.M."/>
            <person name="Kaempfer C.E."/>
            <person name="Kealey J.T."/>
            <person name="Wintroub B.U."/>
        </authorList>
    </citation>
    <scope>PROTEIN SEQUENCE OF 110-137</scope>
</reference>
<name>CBPA3_HUMAN</name>
<proteinExistence type="evidence at protein level"/>
<evidence type="ECO:0000250" key="1"/>
<evidence type="ECO:0000250" key="2">
    <source>
        <dbReference type="UniProtKB" id="P00730"/>
    </source>
</evidence>
<evidence type="ECO:0000255" key="3">
    <source>
        <dbReference type="PROSITE-ProRule" id="PRU01379"/>
    </source>
</evidence>
<evidence type="ECO:0000269" key="4">
    <source>
    </source>
</evidence>
<evidence type="ECO:0000269" key="5">
    <source>
    </source>
</evidence>
<evidence type="ECO:0000269" key="6">
    <source>
    </source>
</evidence>
<evidence type="ECO:0000269" key="7">
    <source>
    </source>
</evidence>
<evidence type="ECO:0000269" key="8">
    <source>
    </source>
</evidence>
<evidence type="ECO:0000305" key="9"/>
<keyword id="KW-0121">Carboxypeptidase</keyword>
<keyword id="KW-0968">Cytoplasmic vesicle</keyword>
<keyword id="KW-0903">Direct protein sequencing</keyword>
<keyword id="KW-1015">Disulfide bond</keyword>
<keyword id="KW-0378">Hydrolase</keyword>
<keyword id="KW-0479">Metal-binding</keyword>
<keyword id="KW-0482">Metalloprotease</keyword>
<keyword id="KW-0645">Protease</keyword>
<keyword id="KW-1267">Proteomics identification</keyword>
<keyword id="KW-1185">Reference proteome</keyword>
<keyword id="KW-0732">Signal</keyword>
<keyword id="KW-0862">Zinc</keyword>
<keyword id="KW-0865">Zymogen</keyword>
<sequence>MRLILPVGLIATTLAIAPVRFDREKVFRVKPQDEKQADIIKDLAKTNELDFWYPGATHHVAANMMVDFRVSEKESQAIQSALDQNKMHYEILIHDLQEEIEKQFDVKEDIPGRHSYAKYNNWEKIVAWTEKMMDKYPEMVSRIKIGSTVEDNPLYVLKIGEKNERRKAIFTDCGIHAREWVSPAFCQWFVYQATKTYGRNKIMTKLLDRMNFYILPVFNVDGYIWSWTKNRMWRKNRSKNQNSKCIGTDLNRNFNASWNSIPNTNDPCADNYRGSAPESEKETKAVTNFIRSHLNEIKVYITFHSYSQMLLFPYGYTSKLPPNHEDLAKVAKIGTDVLSTRYETRYIYGPIESTIYPISGSSLDWAYDLGIKHTFAFELRDKGKFGFLLPESRIKPTCRETMLAVKFIAKYILKHTS</sequence>
<organism>
    <name type="scientific">Homo sapiens</name>
    <name type="common">Human</name>
    <dbReference type="NCBI Taxonomy" id="9606"/>
    <lineage>
        <taxon>Eukaryota</taxon>
        <taxon>Metazoa</taxon>
        <taxon>Chordata</taxon>
        <taxon>Craniata</taxon>
        <taxon>Vertebrata</taxon>
        <taxon>Euteleostomi</taxon>
        <taxon>Mammalia</taxon>
        <taxon>Eutheria</taxon>
        <taxon>Euarchontoglires</taxon>
        <taxon>Primates</taxon>
        <taxon>Haplorrhini</taxon>
        <taxon>Catarrhini</taxon>
        <taxon>Hominidae</taxon>
        <taxon>Homo</taxon>
    </lineage>
</organism>
<comment type="catalytic activity">
    <reaction>
        <text>Release of a C-terminal amino acid, but little or no action with -Asp, -Glu, -Arg, -Lys or -Pro.</text>
        <dbReference type="EC" id="3.4.17.1"/>
    </reaction>
</comment>
<comment type="cofactor">
    <cofactor evidence="2">
        <name>Zn(2+)</name>
        <dbReference type="ChEBI" id="CHEBI:29105"/>
    </cofactor>
    <text evidence="2">Binds 1 zinc ion per subunit.</text>
</comment>
<comment type="subcellular location">
    <subcellularLocation>
        <location>Cytoplasmic vesicle</location>
        <location>Secretory vesicle</location>
    </subcellularLocation>
    <text>Secretory granules.</text>
</comment>
<comment type="similarity">
    <text evidence="9">Belongs to the peptidase M14 family.</text>
</comment>
<protein>
    <recommendedName>
        <fullName>Mast cell carboxypeptidase A</fullName>
        <shortName>MC-CPA</shortName>
        <ecNumber>3.4.17.1</ecNumber>
    </recommendedName>
    <alternativeName>
        <fullName>Carboxypeptidase A3</fullName>
    </alternativeName>
</protein>
<gene>
    <name type="primary">CPA3</name>
</gene>